<organism>
    <name type="scientific">Limosilactobacillus reuteri (strain DSM 20016)</name>
    <name type="common">Lactobacillus reuteri</name>
    <dbReference type="NCBI Taxonomy" id="557436"/>
    <lineage>
        <taxon>Bacteria</taxon>
        <taxon>Bacillati</taxon>
        <taxon>Bacillota</taxon>
        <taxon>Bacilli</taxon>
        <taxon>Lactobacillales</taxon>
        <taxon>Lactobacillaceae</taxon>
        <taxon>Limosilactobacillus</taxon>
    </lineage>
</organism>
<comment type="catalytic activity">
    <reaction evidence="1">
        <text>L-aspartate + NH4(+) + ATP = L-asparagine + AMP + diphosphate + H(+)</text>
        <dbReference type="Rhea" id="RHEA:11372"/>
        <dbReference type="ChEBI" id="CHEBI:15378"/>
        <dbReference type="ChEBI" id="CHEBI:28938"/>
        <dbReference type="ChEBI" id="CHEBI:29991"/>
        <dbReference type="ChEBI" id="CHEBI:30616"/>
        <dbReference type="ChEBI" id="CHEBI:33019"/>
        <dbReference type="ChEBI" id="CHEBI:58048"/>
        <dbReference type="ChEBI" id="CHEBI:456215"/>
        <dbReference type="EC" id="6.3.1.1"/>
    </reaction>
</comment>
<comment type="pathway">
    <text evidence="1">Amino-acid biosynthesis; L-asparagine biosynthesis; L-asparagine from L-aspartate (ammonia route): step 1/1.</text>
</comment>
<comment type="subcellular location">
    <subcellularLocation>
        <location evidence="1">Cytoplasm</location>
    </subcellularLocation>
</comment>
<comment type="similarity">
    <text evidence="1">Belongs to the class-II aminoacyl-tRNA synthetase family. AsnA subfamily.</text>
</comment>
<dbReference type="EC" id="6.3.1.1" evidence="1"/>
<dbReference type="EMBL" id="CP000705">
    <property type="protein sequence ID" value="ABQ84122.1"/>
    <property type="molecule type" value="Genomic_DNA"/>
</dbReference>
<dbReference type="RefSeq" id="WP_003669400.1">
    <property type="nucleotide sequence ID" value="NC_009513.1"/>
</dbReference>
<dbReference type="SMR" id="A5VMP8"/>
<dbReference type="STRING" id="557436.Lreu_1885"/>
<dbReference type="KEGG" id="lre:Lreu_1885"/>
<dbReference type="PATRIC" id="fig|557436.17.peg.1961"/>
<dbReference type="eggNOG" id="COG2502">
    <property type="taxonomic scope" value="Bacteria"/>
</dbReference>
<dbReference type="HOGENOM" id="CLU_071543_0_0_9"/>
<dbReference type="UniPathway" id="UPA00134">
    <property type="reaction ID" value="UER00194"/>
</dbReference>
<dbReference type="Proteomes" id="UP000001991">
    <property type="component" value="Chromosome"/>
</dbReference>
<dbReference type="GO" id="GO:0005829">
    <property type="term" value="C:cytosol"/>
    <property type="evidence" value="ECO:0007669"/>
    <property type="project" value="TreeGrafter"/>
</dbReference>
<dbReference type="GO" id="GO:0004071">
    <property type="term" value="F:aspartate-ammonia ligase activity"/>
    <property type="evidence" value="ECO:0007669"/>
    <property type="project" value="UniProtKB-UniRule"/>
</dbReference>
<dbReference type="GO" id="GO:0005524">
    <property type="term" value="F:ATP binding"/>
    <property type="evidence" value="ECO:0007669"/>
    <property type="project" value="UniProtKB-UniRule"/>
</dbReference>
<dbReference type="GO" id="GO:0140096">
    <property type="term" value="F:catalytic activity, acting on a protein"/>
    <property type="evidence" value="ECO:0007669"/>
    <property type="project" value="UniProtKB-ARBA"/>
</dbReference>
<dbReference type="GO" id="GO:0016740">
    <property type="term" value="F:transferase activity"/>
    <property type="evidence" value="ECO:0007669"/>
    <property type="project" value="UniProtKB-ARBA"/>
</dbReference>
<dbReference type="GO" id="GO:0070981">
    <property type="term" value="P:L-asparagine biosynthetic process"/>
    <property type="evidence" value="ECO:0007669"/>
    <property type="project" value="UniProtKB-UniRule"/>
</dbReference>
<dbReference type="CDD" id="cd00645">
    <property type="entry name" value="AsnA"/>
    <property type="match status" value="1"/>
</dbReference>
<dbReference type="Gene3D" id="3.30.930.10">
    <property type="entry name" value="Bira Bifunctional Protein, Domain 2"/>
    <property type="match status" value="1"/>
</dbReference>
<dbReference type="HAMAP" id="MF_00555">
    <property type="entry name" value="AsnA"/>
    <property type="match status" value="1"/>
</dbReference>
<dbReference type="InterPro" id="IPR006195">
    <property type="entry name" value="aa-tRNA-synth_II"/>
</dbReference>
<dbReference type="InterPro" id="IPR045864">
    <property type="entry name" value="aa-tRNA-synth_II/BPL/LPL"/>
</dbReference>
<dbReference type="InterPro" id="IPR004618">
    <property type="entry name" value="AsnA"/>
</dbReference>
<dbReference type="NCBIfam" id="TIGR00669">
    <property type="entry name" value="asnA"/>
    <property type="match status" value="1"/>
</dbReference>
<dbReference type="PANTHER" id="PTHR30073">
    <property type="entry name" value="ASPARTATE--AMMONIA LIGASE"/>
    <property type="match status" value="1"/>
</dbReference>
<dbReference type="PANTHER" id="PTHR30073:SF5">
    <property type="entry name" value="ASPARTATE--AMMONIA LIGASE"/>
    <property type="match status" value="1"/>
</dbReference>
<dbReference type="Pfam" id="PF03590">
    <property type="entry name" value="AsnA"/>
    <property type="match status" value="1"/>
</dbReference>
<dbReference type="PIRSF" id="PIRSF001555">
    <property type="entry name" value="Asp_ammon_ligase"/>
    <property type="match status" value="1"/>
</dbReference>
<dbReference type="SUPFAM" id="SSF55681">
    <property type="entry name" value="Class II aaRS and biotin synthetases"/>
    <property type="match status" value="1"/>
</dbReference>
<dbReference type="PROSITE" id="PS50862">
    <property type="entry name" value="AA_TRNA_LIGASE_II"/>
    <property type="match status" value="1"/>
</dbReference>
<protein>
    <recommendedName>
        <fullName evidence="1">Aspartate--ammonia ligase</fullName>
        <ecNumber evidence="1">6.3.1.1</ecNumber>
    </recommendedName>
    <alternativeName>
        <fullName evidence="1">Asparagine synthetase A</fullName>
    </alternativeName>
</protein>
<sequence>MDLTIPKDYDPRLSIRETEAAIRYIRETFQDEFGKELNLQRMSAPMFVEKSTGLNDNLNGVEQPVSFEMKDMPNETVEIVHSLAKWKRLALKRYGFGMHEGLYTNMNAIRKEEDLDNFHSIYVDQWDWEKIISKDERTEETLKDTVRDIFKVIKHMEHEVWYKFPQAVYHLPDEIHFVTTQELEDRWPDLTPLEREDKIAKELGAVFVMKIGDKLQRSGKPHDGRAPDYDDWSLNGDIIFWYEPLQRRIEVSSMGIRVSPESMKYQLEQADATDREKLPFHKMLLNGELPYTIGGGIGQSRLCMLLLGKAHIGEVQASIWPEDMIKKCEENHIQIL</sequence>
<name>ASNA_LIMRD</name>
<evidence type="ECO:0000255" key="1">
    <source>
        <dbReference type="HAMAP-Rule" id="MF_00555"/>
    </source>
</evidence>
<accession>A5VMP8</accession>
<keyword id="KW-0028">Amino-acid biosynthesis</keyword>
<keyword id="KW-0061">Asparagine biosynthesis</keyword>
<keyword id="KW-0067">ATP-binding</keyword>
<keyword id="KW-0963">Cytoplasm</keyword>
<keyword id="KW-0436">Ligase</keyword>
<keyword id="KW-0547">Nucleotide-binding</keyword>
<keyword id="KW-1185">Reference proteome</keyword>
<proteinExistence type="inferred from homology"/>
<reference key="1">
    <citation type="journal article" date="2011" name="PLoS Genet.">
        <title>The evolution of host specialization in the vertebrate gut symbiont Lactobacillus reuteri.</title>
        <authorList>
            <person name="Frese S.A."/>
            <person name="Benson A.K."/>
            <person name="Tannock G.W."/>
            <person name="Loach D.M."/>
            <person name="Kim J."/>
            <person name="Zhang M."/>
            <person name="Oh P.L."/>
            <person name="Heng N.C."/>
            <person name="Patil P.B."/>
            <person name="Juge N."/>
            <person name="Mackenzie D.A."/>
            <person name="Pearson B.M."/>
            <person name="Lapidus A."/>
            <person name="Dalin E."/>
            <person name="Tice H."/>
            <person name="Goltsman E."/>
            <person name="Land M."/>
            <person name="Hauser L."/>
            <person name="Ivanova N."/>
            <person name="Kyrpides N.C."/>
            <person name="Walter J."/>
        </authorList>
    </citation>
    <scope>NUCLEOTIDE SEQUENCE [LARGE SCALE GENOMIC DNA]</scope>
    <source>
        <strain>DSM 20016</strain>
    </source>
</reference>
<feature type="chain" id="PRO_1000061106" description="Aspartate--ammonia ligase">
    <location>
        <begin position="1"/>
        <end position="336"/>
    </location>
</feature>
<gene>
    <name evidence="1" type="primary">asnA</name>
    <name type="ordered locus">Lreu_1885</name>
</gene>